<accession>A9W8N6</accession>
<name>RL10_METEP</name>
<proteinExistence type="inferred from homology"/>
<feature type="chain" id="PRO_1000120985" description="Large ribosomal subunit protein uL10">
    <location>
        <begin position="1"/>
        <end position="172"/>
    </location>
</feature>
<sequence length="172" mass="17665">MDRTAKADLVSTLNGVFNANAVVVVAHYKGLTVADMQKLRSQMKQAGATVKVAKNRLASIALDGTDVASIKPLLKGPTLLAYSSDPVAAAKVAVDFAKTNDKLVILGGAMGTTALNPDGVKALASLPSLDELRAKLVGLIQAPATKVAQVVNAPAAKLARVFGAYAKKDEAA</sequence>
<dbReference type="EMBL" id="CP000908">
    <property type="protein sequence ID" value="ABY32385.1"/>
    <property type="molecule type" value="Genomic_DNA"/>
</dbReference>
<dbReference type="RefSeq" id="WP_003597538.1">
    <property type="nucleotide sequence ID" value="NC_010172.1"/>
</dbReference>
<dbReference type="SMR" id="A9W8N6"/>
<dbReference type="GeneID" id="72991733"/>
<dbReference type="KEGG" id="mex:Mext_4015"/>
<dbReference type="eggNOG" id="COG0244">
    <property type="taxonomic scope" value="Bacteria"/>
</dbReference>
<dbReference type="HOGENOM" id="CLU_092227_0_0_5"/>
<dbReference type="BioCyc" id="MEXT419610:MEXT_RS20165-MONOMER"/>
<dbReference type="GO" id="GO:0015934">
    <property type="term" value="C:large ribosomal subunit"/>
    <property type="evidence" value="ECO:0007669"/>
    <property type="project" value="InterPro"/>
</dbReference>
<dbReference type="GO" id="GO:0070180">
    <property type="term" value="F:large ribosomal subunit rRNA binding"/>
    <property type="evidence" value="ECO:0007669"/>
    <property type="project" value="UniProtKB-UniRule"/>
</dbReference>
<dbReference type="GO" id="GO:0003735">
    <property type="term" value="F:structural constituent of ribosome"/>
    <property type="evidence" value="ECO:0007669"/>
    <property type="project" value="InterPro"/>
</dbReference>
<dbReference type="GO" id="GO:0006412">
    <property type="term" value="P:translation"/>
    <property type="evidence" value="ECO:0007669"/>
    <property type="project" value="UniProtKB-UniRule"/>
</dbReference>
<dbReference type="CDD" id="cd05797">
    <property type="entry name" value="Ribosomal_L10"/>
    <property type="match status" value="1"/>
</dbReference>
<dbReference type="Gene3D" id="3.30.70.1730">
    <property type="match status" value="1"/>
</dbReference>
<dbReference type="Gene3D" id="6.10.250.290">
    <property type="match status" value="1"/>
</dbReference>
<dbReference type="HAMAP" id="MF_00362">
    <property type="entry name" value="Ribosomal_uL10"/>
    <property type="match status" value="1"/>
</dbReference>
<dbReference type="InterPro" id="IPR001790">
    <property type="entry name" value="Ribosomal_uL10"/>
</dbReference>
<dbReference type="InterPro" id="IPR043141">
    <property type="entry name" value="Ribosomal_uL10-like_sf"/>
</dbReference>
<dbReference type="InterPro" id="IPR022973">
    <property type="entry name" value="Ribosomal_uL10_bac"/>
</dbReference>
<dbReference type="InterPro" id="IPR047865">
    <property type="entry name" value="Ribosomal_uL10_bac_type"/>
</dbReference>
<dbReference type="InterPro" id="IPR002363">
    <property type="entry name" value="Ribosomal_uL10_CS_bac"/>
</dbReference>
<dbReference type="NCBIfam" id="NF000955">
    <property type="entry name" value="PRK00099.1-1"/>
    <property type="match status" value="1"/>
</dbReference>
<dbReference type="PANTHER" id="PTHR11560">
    <property type="entry name" value="39S RIBOSOMAL PROTEIN L10, MITOCHONDRIAL"/>
    <property type="match status" value="1"/>
</dbReference>
<dbReference type="Pfam" id="PF00466">
    <property type="entry name" value="Ribosomal_L10"/>
    <property type="match status" value="1"/>
</dbReference>
<dbReference type="SUPFAM" id="SSF160369">
    <property type="entry name" value="Ribosomal protein L10-like"/>
    <property type="match status" value="1"/>
</dbReference>
<dbReference type="PROSITE" id="PS01109">
    <property type="entry name" value="RIBOSOMAL_L10"/>
    <property type="match status" value="1"/>
</dbReference>
<organism>
    <name type="scientific">Methylorubrum extorquens (strain PA1)</name>
    <name type="common">Methylobacterium extorquens</name>
    <dbReference type="NCBI Taxonomy" id="419610"/>
    <lineage>
        <taxon>Bacteria</taxon>
        <taxon>Pseudomonadati</taxon>
        <taxon>Pseudomonadota</taxon>
        <taxon>Alphaproteobacteria</taxon>
        <taxon>Hyphomicrobiales</taxon>
        <taxon>Methylobacteriaceae</taxon>
        <taxon>Methylorubrum</taxon>
    </lineage>
</organism>
<comment type="function">
    <text evidence="1">Forms part of the ribosomal stalk, playing a central role in the interaction of the ribosome with GTP-bound translation factors.</text>
</comment>
<comment type="subunit">
    <text evidence="1">Part of the ribosomal stalk of the 50S ribosomal subunit. The N-terminus interacts with L11 and the large rRNA to form the base of the stalk. The C-terminus forms an elongated spine to which L12 dimers bind in a sequential fashion forming a multimeric L10(L12)X complex.</text>
</comment>
<comment type="similarity">
    <text evidence="1">Belongs to the universal ribosomal protein uL10 family.</text>
</comment>
<keyword id="KW-0687">Ribonucleoprotein</keyword>
<keyword id="KW-0689">Ribosomal protein</keyword>
<keyword id="KW-0694">RNA-binding</keyword>
<keyword id="KW-0699">rRNA-binding</keyword>
<gene>
    <name evidence="1" type="primary">rplJ</name>
    <name type="ordered locus">Mext_4015</name>
</gene>
<evidence type="ECO:0000255" key="1">
    <source>
        <dbReference type="HAMAP-Rule" id="MF_00362"/>
    </source>
</evidence>
<evidence type="ECO:0000305" key="2"/>
<reference key="1">
    <citation type="submission" date="2007-12" db="EMBL/GenBank/DDBJ databases">
        <title>Complete sequence of Methylobacterium extorquens PA1.</title>
        <authorList>
            <consortium name="US DOE Joint Genome Institute"/>
            <person name="Copeland A."/>
            <person name="Lucas S."/>
            <person name="Lapidus A."/>
            <person name="Barry K."/>
            <person name="Glavina del Rio T."/>
            <person name="Dalin E."/>
            <person name="Tice H."/>
            <person name="Pitluck S."/>
            <person name="Saunders E."/>
            <person name="Brettin T."/>
            <person name="Bruce D."/>
            <person name="Detter J.C."/>
            <person name="Han C."/>
            <person name="Schmutz J."/>
            <person name="Larimer F."/>
            <person name="Land M."/>
            <person name="Hauser L."/>
            <person name="Kyrpides N."/>
            <person name="Kim E."/>
            <person name="Marx C."/>
            <person name="Richardson P."/>
        </authorList>
    </citation>
    <scope>NUCLEOTIDE SEQUENCE [LARGE SCALE GENOMIC DNA]</scope>
    <source>
        <strain>PA1</strain>
    </source>
</reference>
<protein>
    <recommendedName>
        <fullName evidence="1">Large ribosomal subunit protein uL10</fullName>
    </recommendedName>
    <alternativeName>
        <fullName evidence="2">50S ribosomal protein L10</fullName>
    </alternativeName>
</protein>